<accession>Q2JRJ4</accession>
<name>GLGA2_SYNJA</name>
<comment type="function">
    <text evidence="1">Synthesizes alpha-1,4-glucan chains using ADP-glucose.</text>
</comment>
<comment type="catalytic activity">
    <reaction evidence="1">
        <text>[(1-&gt;4)-alpha-D-glucosyl](n) + ADP-alpha-D-glucose = [(1-&gt;4)-alpha-D-glucosyl](n+1) + ADP + H(+)</text>
        <dbReference type="Rhea" id="RHEA:18189"/>
        <dbReference type="Rhea" id="RHEA-COMP:9584"/>
        <dbReference type="Rhea" id="RHEA-COMP:9587"/>
        <dbReference type="ChEBI" id="CHEBI:15378"/>
        <dbReference type="ChEBI" id="CHEBI:15444"/>
        <dbReference type="ChEBI" id="CHEBI:57498"/>
        <dbReference type="ChEBI" id="CHEBI:456216"/>
        <dbReference type="EC" id="2.4.1.21"/>
    </reaction>
</comment>
<comment type="pathway">
    <text evidence="1">Glycan biosynthesis; glycogen biosynthesis.</text>
</comment>
<comment type="similarity">
    <text evidence="1">Belongs to the glycosyltransferase 1 family. Bacterial/plant glycogen synthase subfamily.</text>
</comment>
<sequence>MQARILFAAAEAAPIAKVGGMADVVGSLPVVLRKLGQDVRIIMPLYGFLWDKFGPEPGQYPRSKDPIWSKQVMGQVADIYESVLPGTDVPLYLVSHYCFAPHRIYYGEDEFWRFTFFANAVAEFAWTYYPWKPNIIHCHDWHTGMIPAWMHQAPDIGTVFTIHNLAYQGPWRWQLERMTWLPWYFSAHNTMAAGILYADQVNTVSPTYAMEIRTSLHGEGLQDLLAWKGERLRGILNGIDTEKFDPRTDPALEANFSIDDLSGRAVNKAALQSRLGLTVNPDVFLMGMVARLVEQKGIDLLIQTLDRFLAYSDSQFVLLGSGEAYYEGRIREMAERHPGRMAYQQGYQPQLAQLIYGGADVFLMPSRFEPCGISQMIAMRYGCVPIARRTGGLVDTVSHHIPSKGIGTGYCFDRYEALDFYTCLARAWEAFQHKDTWQALQKRGMATDFSWQRSALEYLRLYELIMNLPLRPEKTSSENQPAPT</sequence>
<reference key="1">
    <citation type="journal article" date="2007" name="ISME J.">
        <title>Population level functional diversity in a microbial community revealed by comparative genomic and metagenomic analyses.</title>
        <authorList>
            <person name="Bhaya D."/>
            <person name="Grossman A.R."/>
            <person name="Steunou A.-S."/>
            <person name="Khuri N."/>
            <person name="Cohan F.M."/>
            <person name="Hamamura N."/>
            <person name="Melendrez M.C."/>
            <person name="Bateson M.M."/>
            <person name="Ward D.M."/>
            <person name="Heidelberg J.F."/>
        </authorList>
    </citation>
    <scope>NUCLEOTIDE SEQUENCE [LARGE SCALE GENOMIC DNA]</scope>
    <source>
        <strain>JA-3-3Ab</strain>
    </source>
</reference>
<proteinExistence type="inferred from homology"/>
<protein>
    <recommendedName>
        <fullName evidence="1">Glycogen synthase 2</fullName>
        <ecNumber evidence="1">2.4.1.21</ecNumber>
    </recommendedName>
    <alternativeName>
        <fullName evidence="1">Starch [bacterial glycogen] synthase 2</fullName>
    </alternativeName>
</protein>
<evidence type="ECO:0000255" key="1">
    <source>
        <dbReference type="HAMAP-Rule" id="MF_00484"/>
    </source>
</evidence>
<feature type="chain" id="PRO_0000241805" description="Glycogen synthase 2">
    <location>
        <begin position="1"/>
        <end position="484"/>
    </location>
</feature>
<feature type="binding site" evidence="1">
    <location>
        <position position="17"/>
    </location>
    <ligand>
        <name>ADP-alpha-D-glucose</name>
        <dbReference type="ChEBI" id="CHEBI:57498"/>
    </ligand>
</feature>
<dbReference type="EC" id="2.4.1.21" evidence="1"/>
<dbReference type="EMBL" id="CP000239">
    <property type="protein sequence ID" value="ABD00760.1"/>
    <property type="molecule type" value="Genomic_DNA"/>
</dbReference>
<dbReference type="SMR" id="Q2JRJ4"/>
<dbReference type="STRING" id="321327.CYA_2648"/>
<dbReference type="CAZy" id="GT5">
    <property type="family name" value="Glycosyltransferase Family 5"/>
</dbReference>
<dbReference type="KEGG" id="cya:CYA_2648"/>
<dbReference type="eggNOG" id="COG0297">
    <property type="taxonomic scope" value="Bacteria"/>
</dbReference>
<dbReference type="HOGENOM" id="CLU_009583_18_2_3"/>
<dbReference type="OrthoDB" id="9808590at2"/>
<dbReference type="UniPathway" id="UPA00164"/>
<dbReference type="Proteomes" id="UP000008818">
    <property type="component" value="Chromosome"/>
</dbReference>
<dbReference type="GO" id="GO:0009011">
    <property type="term" value="F:alpha-1,4-glucan glucosyltransferase (ADP-glucose donor) activity"/>
    <property type="evidence" value="ECO:0007669"/>
    <property type="project" value="UniProtKB-UniRule"/>
</dbReference>
<dbReference type="GO" id="GO:0004373">
    <property type="term" value="F:alpha-1,4-glucan glucosyltransferase (UDP-glucose donor) activity"/>
    <property type="evidence" value="ECO:0007669"/>
    <property type="project" value="InterPro"/>
</dbReference>
<dbReference type="GO" id="GO:0005978">
    <property type="term" value="P:glycogen biosynthetic process"/>
    <property type="evidence" value="ECO:0007669"/>
    <property type="project" value="UniProtKB-UniRule"/>
</dbReference>
<dbReference type="CDD" id="cd03791">
    <property type="entry name" value="GT5_Glycogen_synthase_DULL1-like"/>
    <property type="match status" value="1"/>
</dbReference>
<dbReference type="Gene3D" id="3.40.50.2000">
    <property type="entry name" value="Glycogen Phosphorylase B"/>
    <property type="match status" value="2"/>
</dbReference>
<dbReference type="HAMAP" id="MF_00484">
    <property type="entry name" value="Glycogen_synth"/>
    <property type="match status" value="1"/>
</dbReference>
<dbReference type="InterPro" id="IPR001296">
    <property type="entry name" value="Glyco_trans_1"/>
</dbReference>
<dbReference type="InterPro" id="IPR011835">
    <property type="entry name" value="GS/SS"/>
</dbReference>
<dbReference type="InterPro" id="IPR013534">
    <property type="entry name" value="Starch_synth_cat_dom"/>
</dbReference>
<dbReference type="NCBIfam" id="TIGR02095">
    <property type="entry name" value="glgA"/>
    <property type="match status" value="1"/>
</dbReference>
<dbReference type="NCBIfam" id="NF001900">
    <property type="entry name" value="PRK00654.1-3"/>
    <property type="match status" value="1"/>
</dbReference>
<dbReference type="PANTHER" id="PTHR45825:SF11">
    <property type="entry name" value="ALPHA AMYLASE DOMAIN-CONTAINING PROTEIN"/>
    <property type="match status" value="1"/>
</dbReference>
<dbReference type="PANTHER" id="PTHR45825">
    <property type="entry name" value="GRANULE-BOUND STARCH SYNTHASE 1, CHLOROPLASTIC/AMYLOPLASTIC"/>
    <property type="match status" value="1"/>
</dbReference>
<dbReference type="Pfam" id="PF08323">
    <property type="entry name" value="Glyco_transf_5"/>
    <property type="match status" value="1"/>
</dbReference>
<dbReference type="Pfam" id="PF00534">
    <property type="entry name" value="Glycos_transf_1"/>
    <property type="match status" value="1"/>
</dbReference>
<dbReference type="SUPFAM" id="SSF53756">
    <property type="entry name" value="UDP-Glycosyltransferase/glycogen phosphorylase"/>
    <property type="match status" value="1"/>
</dbReference>
<organism>
    <name type="scientific">Synechococcus sp. (strain JA-3-3Ab)</name>
    <name type="common">Cyanobacteria bacterium Yellowstone A-Prime</name>
    <dbReference type="NCBI Taxonomy" id="321327"/>
    <lineage>
        <taxon>Bacteria</taxon>
        <taxon>Bacillati</taxon>
        <taxon>Cyanobacteriota</taxon>
        <taxon>Cyanophyceae</taxon>
        <taxon>Synechococcales</taxon>
        <taxon>Synechococcaceae</taxon>
        <taxon>Synechococcus</taxon>
    </lineage>
</organism>
<gene>
    <name evidence="1" type="primary">glgA2</name>
    <name type="ordered locus">CYA_2648</name>
</gene>
<keyword id="KW-0320">Glycogen biosynthesis</keyword>
<keyword id="KW-0328">Glycosyltransferase</keyword>
<keyword id="KW-0808">Transferase</keyword>